<reference key="1">
    <citation type="journal article" date="2002" name="Nature">
        <title>Comparison of the genomes of two Xanthomonas pathogens with differing host specificities.</title>
        <authorList>
            <person name="da Silva A.C.R."/>
            <person name="Ferro J.A."/>
            <person name="Reinach F.C."/>
            <person name="Farah C.S."/>
            <person name="Furlan L.R."/>
            <person name="Quaggio R.B."/>
            <person name="Monteiro-Vitorello C.B."/>
            <person name="Van Sluys M.A."/>
            <person name="Almeida N.F. Jr."/>
            <person name="Alves L.M.C."/>
            <person name="do Amaral A.M."/>
            <person name="Bertolini M.C."/>
            <person name="Camargo L.E.A."/>
            <person name="Camarotte G."/>
            <person name="Cannavan F."/>
            <person name="Cardozo J."/>
            <person name="Chambergo F."/>
            <person name="Ciapina L.P."/>
            <person name="Cicarelli R.M.B."/>
            <person name="Coutinho L.L."/>
            <person name="Cursino-Santos J.R."/>
            <person name="El-Dorry H."/>
            <person name="Faria J.B."/>
            <person name="Ferreira A.J.S."/>
            <person name="Ferreira R.C.C."/>
            <person name="Ferro M.I.T."/>
            <person name="Formighieri E.F."/>
            <person name="Franco M.C."/>
            <person name="Greggio C.C."/>
            <person name="Gruber A."/>
            <person name="Katsuyama A.M."/>
            <person name="Kishi L.T."/>
            <person name="Leite R.P."/>
            <person name="Lemos E.G.M."/>
            <person name="Lemos M.V.F."/>
            <person name="Locali E.C."/>
            <person name="Machado M.A."/>
            <person name="Madeira A.M.B.N."/>
            <person name="Martinez-Rossi N.M."/>
            <person name="Martins E.C."/>
            <person name="Meidanis J."/>
            <person name="Menck C.F.M."/>
            <person name="Miyaki C.Y."/>
            <person name="Moon D.H."/>
            <person name="Moreira L.M."/>
            <person name="Novo M.T.M."/>
            <person name="Okura V.K."/>
            <person name="Oliveira M.C."/>
            <person name="Oliveira V.R."/>
            <person name="Pereira H.A."/>
            <person name="Rossi A."/>
            <person name="Sena J.A.D."/>
            <person name="Silva C."/>
            <person name="de Souza R.F."/>
            <person name="Spinola L.A.F."/>
            <person name="Takita M.A."/>
            <person name="Tamura R.E."/>
            <person name="Teixeira E.C."/>
            <person name="Tezza R.I.D."/>
            <person name="Trindade dos Santos M."/>
            <person name="Truffi D."/>
            <person name="Tsai S.M."/>
            <person name="White F.F."/>
            <person name="Setubal J.C."/>
            <person name="Kitajima J.P."/>
        </authorList>
    </citation>
    <scope>NUCLEOTIDE SEQUENCE [LARGE SCALE GENOMIC DNA]</scope>
    <source>
        <strain>306</strain>
    </source>
</reference>
<gene>
    <name evidence="1" type="primary">tgt</name>
    <name type="ordered locus">XAC2513</name>
</gene>
<evidence type="ECO:0000255" key="1">
    <source>
        <dbReference type="HAMAP-Rule" id="MF_00168"/>
    </source>
</evidence>
<proteinExistence type="inferred from homology"/>
<dbReference type="EC" id="2.4.2.29" evidence="1"/>
<dbReference type="EMBL" id="AE008923">
    <property type="protein sequence ID" value="AAM37364.1"/>
    <property type="molecule type" value="Genomic_DNA"/>
</dbReference>
<dbReference type="RefSeq" id="WP_003489770.1">
    <property type="nucleotide sequence ID" value="NC_003919.1"/>
</dbReference>
<dbReference type="SMR" id="Q8PJL7"/>
<dbReference type="GeneID" id="66911620"/>
<dbReference type="KEGG" id="xac:XAC2513"/>
<dbReference type="eggNOG" id="COG0343">
    <property type="taxonomic scope" value="Bacteria"/>
</dbReference>
<dbReference type="HOGENOM" id="CLU_022060_0_1_6"/>
<dbReference type="UniPathway" id="UPA00392"/>
<dbReference type="Proteomes" id="UP000000576">
    <property type="component" value="Chromosome"/>
</dbReference>
<dbReference type="GO" id="GO:0005829">
    <property type="term" value="C:cytosol"/>
    <property type="evidence" value="ECO:0007669"/>
    <property type="project" value="TreeGrafter"/>
</dbReference>
<dbReference type="GO" id="GO:0046872">
    <property type="term" value="F:metal ion binding"/>
    <property type="evidence" value="ECO:0007669"/>
    <property type="project" value="UniProtKB-KW"/>
</dbReference>
<dbReference type="GO" id="GO:0008479">
    <property type="term" value="F:tRNA-guanosine(34) queuine transglycosylase activity"/>
    <property type="evidence" value="ECO:0007669"/>
    <property type="project" value="UniProtKB-UniRule"/>
</dbReference>
<dbReference type="GO" id="GO:0008616">
    <property type="term" value="P:queuosine biosynthetic process"/>
    <property type="evidence" value="ECO:0007669"/>
    <property type="project" value="UniProtKB-UniRule"/>
</dbReference>
<dbReference type="GO" id="GO:0002099">
    <property type="term" value="P:tRNA wobble guanine modification"/>
    <property type="evidence" value="ECO:0007669"/>
    <property type="project" value="TreeGrafter"/>
</dbReference>
<dbReference type="GO" id="GO:0101030">
    <property type="term" value="P:tRNA-guanine transglycosylation"/>
    <property type="evidence" value="ECO:0007669"/>
    <property type="project" value="InterPro"/>
</dbReference>
<dbReference type="FunFam" id="3.20.20.105:FF:000001">
    <property type="entry name" value="Queuine tRNA-ribosyltransferase"/>
    <property type="match status" value="1"/>
</dbReference>
<dbReference type="Gene3D" id="3.20.20.105">
    <property type="entry name" value="Queuine tRNA-ribosyltransferase-like"/>
    <property type="match status" value="1"/>
</dbReference>
<dbReference type="HAMAP" id="MF_00168">
    <property type="entry name" value="Q_tRNA_Tgt"/>
    <property type="match status" value="1"/>
</dbReference>
<dbReference type="InterPro" id="IPR050076">
    <property type="entry name" value="ArchSynthase1/Queuine_TRR"/>
</dbReference>
<dbReference type="InterPro" id="IPR004803">
    <property type="entry name" value="TGT"/>
</dbReference>
<dbReference type="InterPro" id="IPR036511">
    <property type="entry name" value="TGT-like_sf"/>
</dbReference>
<dbReference type="InterPro" id="IPR002616">
    <property type="entry name" value="tRNA_ribo_trans-like"/>
</dbReference>
<dbReference type="NCBIfam" id="TIGR00430">
    <property type="entry name" value="Q_tRNA_tgt"/>
    <property type="match status" value="1"/>
</dbReference>
<dbReference type="NCBIfam" id="TIGR00449">
    <property type="entry name" value="tgt_general"/>
    <property type="match status" value="1"/>
</dbReference>
<dbReference type="PANTHER" id="PTHR46499">
    <property type="entry name" value="QUEUINE TRNA-RIBOSYLTRANSFERASE"/>
    <property type="match status" value="1"/>
</dbReference>
<dbReference type="PANTHER" id="PTHR46499:SF1">
    <property type="entry name" value="QUEUINE TRNA-RIBOSYLTRANSFERASE"/>
    <property type="match status" value="1"/>
</dbReference>
<dbReference type="Pfam" id="PF01702">
    <property type="entry name" value="TGT"/>
    <property type="match status" value="1"/>
</dbReference>
<dbReference type="SUPFAM" id="SSF51713">
    <property type="entry name" value="tRNA-guanine transglycosylase"/>
    <property type="match status" value="1"/>
</dbReference>
<name>TGT_XANAC</name>
<protein>
    <recommendedName>
        <fullName evidence="1">Queuine tRNA-ribosyltransferase</fullName>
        <ecNumber evidence="1">2.4.2.29</ecNumber>
    </recommendedName>
    <alternativeName>
        <fullName evidence="1">Guanine insertion enzyme</fullName>
    </alternativeName>
    <alternativeName>
        <fullName evidence="1">tRNA-guanine transglycosylase</fullName>
    </alternativeName>
</protein>
<accession>Q8PJL7</accession>
<comment type="function">
    <text evidence="1">Catalyzes the base-exchange of a guanine (G) residue with the queuine precursor 7-aminomethyl-7-deazaguanine (PreQ1) at position 34 (anticodon wobble position) in tRNAs with GU(N) anticodons (tRNA-Asp, -Asn, -His and -Tyr). Catalysis occurs through a double-displacement mechanism. The nucleophile active site attacks the C1' of nucleotide 34 to detach the guanine base from the RNA, forming a covalent enzyme-RNA intermediate. The proton acceptor active site deprotonates the incoming PreQ1, allowing a nucleophilic attack on the C1' of the ribose to form the product. After dissociation, two additional enzymatic reactions on the tRNA convert PreQ1 to queuine (Q), resulting in the hypermodified nucleoside queuosine (7-(((4,5-cis-dihydroxy-2-cyclopenten-1-yl)amino)methyl)-7-deazaguanosine).</text>
</comment>
<comment type="catalytic activity">
    <reaction evidence="1">
        <text>7-aminomethyl-7-carbaguanine + guanosine(34) in tRNA = 7-aminomethyl-7-carbaguanosine(34) in tRNA + guanine</text>
        <dbReference type="Rhea" id="RHEA:24104"/>
        <dbReference type="Rhea" id="RHEA-COMP:10341"/>
        <dbReference type="Rhea" id="RHEA-COMP:10342"/>
        <dbReference type="ChEBI" id="CHEBI:16235"/>
        <dbReference type="ChEBI" id="CHEBI:58703"/>
        <dbReference type="ChEBI" id="CHEBI:74269"/>
        <dbReference type="ChEBI" id="CHEBI:82833"/>
        <dbReference type="EC" id="2.4.2.29"/>
    </reaction>
</comment>
<comment type="cofactor">
    <cofactor evidence="1">
        <name>Zn(2+)</name>
        <dbReference type="ChEBI" id="CHEBI:29105"/>
    </cofactor>
    <text evidence="1">Binds 1 zinc ion per subunit.</text>
</comment>
<comment type="pathway">
    <text evidence="1">tRNA modification; tRNA-queuosine biosynthesis.</text>
</comment>
<comment type="subunit">
    <text evidence="1">Homodimer. Within each dimer, one monomer is responsible for RNA recognition and catalysis, while the other monomer binds to the replacement base PreQ1.</text>
</comment>
<comment type="similarity">
    <text evidence="1">Belongs to the queuine tRNA-ribosyltransferase family.</text>
</comment>
<keyword id="KW-0328">Glycosyltransferase</keyword>
<keyword id="KW-0479">Metal-binding</keyword>
<keyword id="KW-0671">Queuosine biosynthesis</keyword>
<keyword id="KW-0808">Transferase</keyword>
<keyword id="KW-0819">tRNA processing</keyword>
<keyword id="KW-0862">Zinc</keyword>
<organism>
    <name type="scientific">Xanthomonas axonopodis pv. citri (strain 306)</name>
    <dbReference type="NCBI Taxonomy" id="190486"/>
    <lineage>
        <taxon>Bacteria</taxon>
        <taxon>Pseudomonadati</taxon>
        <taxon>Pseudomonadota</taxon>
        <taxon>Gammaproteobacteria</taxon>
        <taxon>Lysobacterales</taxon>
        <taxon>Lysobacteraceae</taxon>
        <taxon>Xanthomonas</taxon>
    </lineage>
</organism>
<sequence length="381" mass="42126">MSRLQFQLQATDGHARRGRLTFPRGTVETPAFMPVGTYGSVKGILPEQIRALGAEIILGNTFHLYLRPGLEVIGDHGGLHGFARWDGPILTDSGGFQVFSLAHRRKITEQGVTFSSPTDGARVFLGPEESMKIQKVLDSDIVMIFDECTPYPATEDVARRSMELSLRWAQRSRDAHDGLGNDAALFGIVQGGVHPDLRSRSLDGLQAIGFDGYAIGGLAVGEPEHERNAMLEHLHPRLPAERPRYLMGVGRPEDLVEGVARGVDMFDCVMPTRNARNGHYFTSFGTVRIRNAKYERDLDTIEPGCGCHACSSGYTRAYLRHLDRCNEMLAPMLGTLHNLWYYEKLMADMRAAIASGTFVEFRRSFYAARGATTPPLPGETS</sequence>
<feature type="chain" id="PRO_0000135556" description="Queuine tRNA-ribosyltransferase">
    <location>
        <begin position="1"/>
        <end position="381"/>
    </location>
</feature>
<feature type="region of interest" description="RNA binding" evidence="1">
    <location>
        <begin position="248"/>
        <end position="254"/>
    </location>
</feature>
<feature type="region of interest" description="RNA binding; important for wobble base 34 recognition" evidence="1">
    <location>
        <begin position="272"/>
        <end position="276"/>
    </location>
</feature>
<feature type="active site" description="Proton acceptor" evidence="1">
    <location>
        <position position="92"/>
    </location>
</feature>
<feature type="active site" description="Nucleophile" evidence="1">
    <location>
        <position position="267"/>
    </location>
</feature>
<feature type="binding site" evidence="1">
    <location>
        <begin position="92"/>
        <end position="96"/>
    </location>
    <ligand>
        <name>substrate</name>
    </ligand>
</feature>
<feature type="binding site" evidence="1">
    <location>
        <position position="146"/>
    </location>
    <ligand>
        <name>substrate</name>
    </ligand>
</feature>
<feature type="binding site" evidence="1">
    <location>
        <position position="190"/>
    </location>
    <ligand>
        <name>substrate</name>
    </ligand>
</feature>
<feature type="binding site" evidence="1">
    <location>
        <position position="217"/>
    </location>
    <ligand>
        <name>substrate</name>
    </ligand>
</feature>
<feature type="binding site" evidence="1">
    <location>
        <position position="305"/>
    </location>
    <ligand>
        <name>Zn(2+)</name>
        <dbReference type="ChEBI" id="CHEBI:29105"/>
    </ligand>
</feature>
<feature type="binding site" evidence="1">
    <location>
        <position position="307"/>
    </location>
    <ligand>
        <name>Zn(2+)</name>
        <dbReference type="ChEBI" id="CHEBI:29105"/>
    </ligand>
</feature>
<feature type="binding site" evidence="1">
    <location>
        <position position="310"/>
    </location>
    <ligand>
        <name>Zn(2+)</name>
        <dbReference type="ChEBI" id="CHEBI:29105"/>
    </ligand>
</feature>
<feature type="binding site" evidence="1">
    <location>
        <position position="337"/>
    </location>
    <ligand>
        <name>Zn(2+)</name>
        <dbReference type="ChEBI" id="CHEBI:29105"/>
    </ligand>
</feature>